<gene>
    <name evidence="1" type="primary">obg</name>
    <name type="ordered locus">TP_0742</name>
</gene>
<protein>
    <recommendedName>
        <fullName evidence="1">GTPase Obg</fullName>
        <ecNumber evidence="1">3.6.5.-</ecNumber>
    </recommendedName>
    <alternativeName>
        <fullName evidence="1">GTP-binding protein Obg</fullName>
    </alternativeName>
</protein>
<name>OBG_TREPA</name>
<evidence type="ECO:0000255" key="1">
    <source>
        <dbReference type="HAMAP-Rule" id="MF_01454"/>
    </source>
</evidence>
<evidence type="ECO:0000255" key="2">
    <source>
        <dbReference type="PROSITE-ProRule" id="PRU01231"/>
    </source>
</evidence>
<reference key="1">
    <citation type="journal article" date="1998" name="Science">
        <title>Complete genome sequence of Treponema pallidum, the syphilis spirochete.</title>
        <authorList>
            <person name="Fraser C.M."/>
            <person name="Norris S.J."/>
            <person name="Weinstock G.M."/>
            <person name="White O."/>
            <person name="Sutton G.G."/>
            <person name="Dodson R.J."/>
            <person name="Gwinn M.L."/>
            <person name="Hickey E.K."/>
            <person name="Clayton R.A."/>
            <person name="Ketchum K.A."/>
            <person name="Sodergren E."/>
            <person name="Hardham J.M."/>
            <person name="McLeod M.P."/>
            <person name="Salzberg S.L."/>
            <person name="Peterson J.D."/>
            <person name="Khalak H.G."/>
            <person name="Richardson D.L."/>
            <person name="Howell J.K."/>
            <person name="Chidambaram M."/>
            <person name="Utterback T.R."/>
            <person name="McDonald L.A."/>
            <person name="Artiach P."/>
            <person name="Bowman C."/>
            <person name="Cotton M.D."/>
            <person name="Fujii C."/>
            <person name="Garland S.A."/>
            <person name="Hatch B."/>
            <person name="Horst K."/>
            <person name="Roberts K.M."/>
            <person name="Sandusky M."/>
            <person name="Weidman J.F."/>
            <person name="Smith H.O."/>
            <person name="Venter J.C."/>
        </authorList>
    </citation>
    <scope>NUCLEOTIDE SEQUENCE [LARGE SCALE GENOMIC DNA]</scope>
    <source>
        <strain>Nichols</strain>
    </source>
</reference>
<sequence>MASFVDEVLIRVSSGRGGNGCVAFRREKYVPRGGPAGGDGGRGGDVVFQVRRNMRTLVHLRYGRVFRAKNGQDGEGARRFGAKGHDCVIPLPPGCLLRDAQTHEVLHDFGHAHEGCVTLLSGGRGGWGNYHFRGPVQQAPQRAHSGQPGQERVVHVELRIVADVGFVGLPNAGKSSLLNFFTHARSRVAPYPFTTRIPYLGVLRTGDGRDVILADVPGILERASQGVGLGLRFLKHLTRCAGLAFLIDLADERALHTYDLLCKELYAFSPVFETKARVLVGTKLDLPNARECLQQLRAQHPSTEVCGVSVHNRWGLDELQEAFVRLSDAGAGALRSPVWRNQAPSFMYAQLEDPVCQVRDDFGATVSLSRKRKVRG</sequence>
<dbReference type="EC" id="3.6.5.-" evidence="1"/>
<dbReference type="EMBL" id="AE000520">
    <property type="protein sequence ID" value="AAC65711.1"/>
    <property type="molecule type" value="Genomic_DNA"/>
</dbReference>
<dbReference type="PIR" id="C71286">
    <property type="entry name" value="C71286"/>
</dbReference>
<dbReference type="SMR" id="O83724"/>
<dbReference type="STRING" id="243276.TP_0742"/>
<dbReference type="EnsemblBacteria" id="AAC65711">
    <property type="protein sequence ID" value="AAC65711"/>
    <property type="gene ID" value="TP_0742"/>
</dbReference>
<dbReference type="KEGG" id="tpa:TP_0742"/>
<dbReference type="KEGG" id="tpw:TPANIC_0742"/>
<dbReference type="eggNOG" id="COG0536">
    <property type="taxonomic scope" value="Bacteria"/>
</dbReference>
<dbReference type="HOGENOM" id="CLU_011747_2_0_12"/>
<dbReference type="OrthoDB" id="9807318at2"/>
<dbReference type="Proteomes" id="UP000000811">
    <property type="component" value="Chromosome"/>
</dbReference>
<dbReference type="GO" id="GO:0005737">
    <property type="term" value="C:cytoplasm"/>
    <property type="evidence" value="ECO:0007669"/>
    <property type="project" value="UniProtKB-SubCell"/>
</dbReference>
<dbReference type="GO" id="GO:0005525">
    <property type="term" value="F:GTP binding"/>
    <property type="evidence" value="ECO:0007669"/>
    <property type="project" value="UniProtKB-UniRule"/>
</dbReference>
<dbReference type="GO" id="GO:0003924">
    <property type="term" value="F:GTPase activity"/>
    <property type="evidence" value="ECO:0007669"/>
    <property type="project" value="UniProtKB-UniRule"/>
</dbReference>
<dbReference type="GO" id="GO:0000287">
    <property type="term" value="F:magnesium ion binding"/>
    <property type="evidence" value="ECO:0007669"/>
    <property type="project" value="InterPro"/>
</dbReference>
<dbReference type="GO" id="GO:0042254">
    <property type="term" value="P:ribosome biogenesis"/>
    <property type="evidence" value="ECO:0007669"/>
    <property type="project" value="UniProtKB-UniRule"/>
</dbReference>
<dbReference type="CDD" id="cd01898">
    <property type="entry name" value="Obg"/>
    <property type="match status" value="1"/>
</dbReference>
<dbReference type="FunFam" id="2.70.210.12:FF:000001">
    <property type="entry name" value="GTPase Obg"/>
    <property type="match status" value="1"/>
</dbReference>
<dbReference type="Gene3D" id="2.70.210.12">
    <property type="entry name" value="GTP1/OBG domain"/>
    <property type="match status" value="1"/>
</dbReference>
<dbReference type="Gene3D" id="3.40.50.300">
    <property type="entry name" value="P-loop containing nucleotide triphosphate hydrolases"/>
    <property type="match status" value="1"/>
</dbReference>
<dbReference type="HAMAP" id="MF_01454">
    <property type="entry name" value="GTPase_Obg"/>
    <property type="match status" value="1"/>
</dbReference>
<dbReference type="InterPro" id="IPR031167">
    <property type="entry name" value="G_OBG"/>
</dbReference>
<dbReference type="InterPro" id="IPR006073">
    <property type="entry name" value="GTP-bd"/>
</dbReference>
<dbReference type="InterPro" id="IPR014100">
    <property type="entry name" value="GTP-bd_Obg/CgtA"/>
</dbReference>
<dbReference type="InterPro" id="IPR006169">
    <property type="entry name" value="GTP1_OBG_dom"/>
</dbReference>
<dbReference type="InterPro" id="IPR036726">
    <property type="entry name" value="GTP1_OBG_dom_sf"/>
</dbReference>
<dbReference type="InterPro" id="IPR045086">
    <property type="entry name" value="OBG_GTPase"/>
</dbReference>
<dbReference type="InterPro" id="IPR027417">
    <property type="entry name" value="P-loop_NTPase"/>
</dbReference>
<dbReference type="NCBIfam" id="TIGR02729">
    <property type="entry name" value="Obg_CgtA"/>
    <property type="match status" value="1"/>
</dbReference>
<dbReference type="NCBIfam" id="NF008956">
    <property type="entry name" value="PRK12299.1"/>
    <property type="match status" value="1"/>
</dbReference>
<dbReference type="PANTHER" id="PTHR11702">
    <property type="entry name" value="DEVELOPMENTALLY REGULATED GTP-BINDING PROTEIN-RELATED"/>
    <property type="match status" value="1"/>
</dbReference>
<dbReference type="PANTHER" id="PTHR11702:SF31">
    <property type="entry name" value="MITOCHONDRIAL RIBOSOME-ASSOCIATED GTPASE 2"/>
    <property type="match status" value="1"/>
</dbReference>
<dbReference type="Pfam" id="PF01018">
    <property type="entry name" value="GTP1_OBG"/>
    <property type="match status" value="1"/>
</dbReference>
<dbReference type="Pfam" id="PF01926">
    <property type="entry name" value="MMR_HSR1"/>
    <property type="match status" value="1"/>
</dbReference>
<dbReference type="PIRSF" id="PIRSF002401">
    <property type="entry name" value="GTP_bd_Obg/CgtA"/>
    <property type="match status" value="1"/>
</dbReference>
<dbReference type="PRINTS" id="PR00326">
    <property type="entry name" value="GTP1OBG"/>
</dbReference>
<dbReference type="SUPFAM" id="SSF82051">
    <property type="entry name" value="Obg GTP-binding protein N-terminal domain"/>
    <property type="match status" value="1"/>
</dbReference>
<dbReference type="SUPFAM" id="SSF52540">
    <property type="entry name" value="P-loop containing nucleoside triphosphate hydrolases"/>
    <property type="match status" value="1"/>
</dbReference>
<dbReference type="PROSITE" id="PS51710">
    <property type="entry name" value="G_OBG"/>
    <property type="match status" value="1"/>
</dbReference>
<dbReference type="PROSITE" id="PS51883">
    <property type="entry name" value="OBG"/>
    <property type="match status" value="1"/>
</dbReference>
<organism>
    <name type="scientific">Treponema pallidum (strain Nichols)</name>
    <dbReference type="NCBI Taxonomy" id="243276"/>
    <lineage>
        <taxon>Bacteria</taxon>
        <taxon>Pseudomonadati</taxon>
        <taxon>Spirochaetota</taxon>
        <taxon>Spirochaetia</taxon>
        <taxon>Spirochaetales</taxon>
        <taxon>Treponemataceae</taxon>
        <taxon>Treponema</taxon>
    </lineage>
</organism>
<comment type="function">
    <text evidence="1">An essential GTPase which binds GTP, GDP and possibly (p)ppGpp with moderate affinity, with high nucleotide exchange rates and a fairly low GTP hydrolysis rate. Plays a role in control of the cell cycle, stress response, ribosome biogenesis and in those bacteria that undergo differentiation, in morphogenesis control.</text>
</comment>
<comment type="cofactor">
    <cofactor evidence="1">
        <name>Mg(2+)</name>
        <dbReference type="ChEBI" id="CHEBI:18420"/>
    </cofactor>
</comment>
<comment type="subunit">
    <text evidence="1">Monomer.</text>
</comment>
<comment type="subcellular location">
    <subcellularLocation>
        <location evidence="1">Cytoplasm</location>
    </subcellularLocation>
</comment>
<comment type="similarity">
    <text evidence="1">Belongs to the TRAFAC class OBG-HflX-like GTPase superfamily. OBG GTPase family.</text>
</comment>
<feature type="chain" id="PRO_0000386366" description="GTPase Obg">
    <location>
        <begin position="1"/>
        <end position="376"/>
    </location>
</feature>
<feature type="domain" description="Obg" evidence="2">
    <location>
        <begin position="2"/>
        <end position="161"/>
    </location>
</feature>
<feature type="domain" description="OBG-type G" evidence="1">
    <location>
        <begin position="162"/>
        <end position="328"/>
    </location>
</feature>
<feature type="binding site" evidence="1">
    <location>
        <begin position="168"/>
        <end position="175"/>
    </location>
    <ligand>
        <name>GTP</name>
        <dbReference type="ChEBI" id="CHEBI:37565"/>
    </ligand>
</feature>
<feature type="binding site" evidence="1">
    <location>
        <position position="175"/>
    </location>
    <ligand>
        <name>Mg(2+)</name>
        <dbReference type="ChEBI" id="CHEBI:18420"/>
    </ligand>
</feature>
<feature type="binding site" evidence="1">
    <location>
        <begin position="193"/>
        <end position="197"/>
    </location>
    <ligand>
        <name>GTP</name>
        <dbReference type="ChEBI" id="CHEBI:37565"/>
    </ligand>
</feature>
<feature type="binding site" evidence="1">
    <location>
        <position position="195"/>
    </location>
    <ligand>
        <name>Mg(2+)</name>
        <dbReference type="ChEBI" id="CHEBI:18420"/>
    </ligand>
</feature>
<feature type="binding site" evidence="1">
    <location>
        <begin position="215"/>
        <end position="218"/>
    </location>
    <ligand>
        <name>GTP</name>
        <dbReference type="ChEBI" id="CHEBI:37565"/>
    </ligand>
</feature>
<feature type="binding site" evidence="1">
    <location>
        <begin position="282"/>
        <end position="285"/>
    </location>
    <ligand>
        <name>GTP</name>
        <dbReference type="ChEBI" id="CHEBI:37565"/>
    </ligand>
</feature>
<feature type="binding site" evidence="1">
    <location>
        <begin position="309"/>
        <end position="311"/>
    </location>
    <ligand>
        <name>GTP</name>
        <dbReference type="ChEBI" id="CHEBI:37565"/>
    </ligand>
</feature>
<proteinExistence type="inferred from homology"/>
<keyword id="KW-0963">Cytoplasm</keyword>
<keyword id="KW-0342">GTP-binding</keyword>
<keyword id="KW-0378">Hydrolase</keyword>
<keyword id="KW-0460">Magnesium</keyword>
<keyword id="KW-0479">Metal-binding</keyword>
<keyword id="KW-0547">Nucleotide-binding</keyword>
<keyword id="KW-1185">Reference proteome</keyword>
<accession>O83724</accession>